<evidence type="ECO:0000250" key="1"/>
<evidence type="ECO:0000255" key="2"/>
<evidence type="ECO:0000255" key="3">
    <source>
        <dbReference type="PROSITE-ProRule" id="PRU00076"/>
    </source>
</evidence>
<evidence type="ECO:0000255" key="4">
    <source>
        <dbReference type="PROSITE-ProRule" id="PRU00384"/>
    </source>
</evidence>
<evidence type="ECO:0000303" key="5">
    <source ref="1"/>
</evidence>
<proteinExistence type="evidence at transcript level"/>
<gene>
    <name type="primary">Egfl7</name>
    <name type="synonym">Cbl20</name>
    <name type="synonym">Megf7</name>
</gene>
<organism>
    <name type="scientific">Rattus norvegicus</name>
    <name type="common">Rat</name>
    <dbReference type="NCBI Taxonomy" id="10116"/>
    <lineage>
        <taxon>Eukaryota</taxon>
        <taxon>Metazoa</taxon>
        <taxon>Chordata</taxon>
        <taxon>Craniata</taxon>
        <taxon>Vertebrata</taxon>
        <taxon>Euteleostomi</taxon>
        <taxon>Mammalia</taxon>
        <taxon>Eutheria</taxon>
        <taxon>Euarchontoglires</taxon>
        <taxon>Glires</taxon>
        <taxon>Rodentia</taxon>
        <taxon>Myomorpha</taxon>
        <taxon>Muroidea</taxon>
        <taxon>Muridae</taxon>
        <taxon>Murinae</taxon>
        <taxon>Rattus</taxon>
    </lineage>
</organism>
<dbReference type="EMBL" id="AF223678">
    <property type="protein sequence ID" value="AAF35352.1"/>
    <property type="molecule type" value="mRNA"/>
</dbReference>
<dbReference type="EMBL" id="BC078725">
    <property type="protein sequence ID" value="AAH78725.1"/>
    <property type="molecule type" value="mRNA"/>
</dbReference>
<dbReference type="RefSeq" id="NP_620804.1">
    <property type="nucleotide sequence ID" value="NM_139104.1"/>
</dbReference>
<dbReference type="FunCoup" id="Q6AZ60">
    <property type="interactions" value="199"/>
</dbReference>
<dbReference type="STRING" id="10116.ENSRNOP00000026318"/>
<dbReference type="GlyGen" id="Q6AZ60">
    <property type="glycosylation" value="1 site"/>
</dbReference>
<dbReference type="PhosphoSitePlus" id="Q6AZ60"/>
<dbReference type="PaxDb" id="10116-ENSRNOP00000026318"/>
<dbReference type="UCSC" id="RGD:708507">
    <molecule id="Q6AZ60-1"/>
    <property type="organism name" value="rat"/>
</dbReference>
<dbReference type="AGR" id="RGD:708507"/>
<dbReference type="RGD" id="708507">
    <property type="gene designation" value="Egfl7"/>
</dbReference>
<dbReference type="VEuPathDB" id="HostDB:ENSRNOG00000019388"/>
<dbReference type="eggNOG" id="KOG1217">
    <property type="taxonomic scope" value="Eukaryota"/>
</dbReference>
<dbReference type="HOGENOM" id="CLU_083642_0_0_1"/>
<dbReference type="InParanoid" id="Q6AZ60"/>
<dbReference type="PhylomeDB" id="Q6AZ60"/>
<dbReference type="PRO" id="PR:Q6AZ60"/>
<dbReference type="Proteomes" id="UP000002494">
    <property type="component" value="Chromosome 3"/>
</dbReference>
<dbReference type="Bgee" id="ENSRNOG00000019388">
    <property type="expression patterns" value="Expressed in lung and 19 other cell types or tissues"/>
</dbReference>
<dbReference type="GO" id="GO:0009986">
    <property type="term" value="C:cell surface"/>
    <property type="evidence" value="ECO:0000318"/>
    <property type="project" value="GO_Central"/>
</dbReference>
<dbReference type="GO" id="GO:0005576">
    <property type="term" value="C:extracellular region"/>
    <property type="evidence" value="ECO:0000250"/>
    <property type="project" value="UniProtKB"/>
</dbReference>
<dbReference type="GO" id="GO:0005615">
    <property type="term" value="C:extracellular space"/>
    <property type="evidence" value="ECO:0000266"/>
    <property type="project" value="RGD"/>
</dbReference>
<dbReference type="GO" id="GO:0005509">
    <property type="term" value="F:calcium ion binding"/>
    <property type="evidence" value="ECO:0007669"/>
    <property type="project" value="InterPro"/>
</dbReference>
<dbReference type="GO" id="GO:0005112">
    <property type="term" value="F:Notch binding"/>
    <property type="evidence" value="ECO:0000266"/>
    <property type="project" value="RGD"/>
</dbReference>
<dbReference type="GO" id="GO:0005102">
    <property type="term" value="F:signaling receptor binding"/>
    <property type="evidence" value="ECO:0000318"/>
    <property type="project" value="GO_Central"/>
</dbReference>
<dbReference type="GO" id="GO:0001525">
    <property type="term" value="P:angiogenesis"/>
    <property type="evidence" value="ECO:0007669"/>
    <property type="project" value="UniProtKB-KW"/>
</dbReference>
<dbReference type="GO" id="GO:0001568">
    <property type="term" value="P:blood vessel development"/>
    <property type="evidence" value="ECO:0000250"/>
    <property type="project" value="UniProtKB"/>
</dbReference>
<dbReference type="GO" id="GO:0007155">
    <property type="term" value="P:cell adhesion"/>
    <property type="evidence" value="ECO:0007669"/>
    <property type="project" value="UniProtKB-KW"/>
</dbReference>
<dbReference type="GO" id="GO:0045746">
    <property type="term" value="P:negative regulation of Notch signaling pathway"/>
    <property type="evidence" value="ECO:0000266"/>
    <property type="project" value="RGD"/>
</dbReference>
<dbReference type="GO" id="GO:0014912">
    <property type="term" value="P:negative regulation of smooth muscle cell migration"/>
    <property type="evidence" value="ECO:0000266"/>
    <property type="project" value="RGD"/>
</dbReference>
<dbReference type="GO" id="GO:0001938">
    <property type="term" value="P:positive regulation of endothelial cell proliferation"/>
    <property type="evidence" value="ECO:0000266"/>
    <property type="project" value="RGD"/>
</dbReference>
<dbReference type="GO" id="GO:0014909">
    <property type="term" value="P:smooth muscle cell migration"/>
    <property type="evidence" value="ECO:0000266"/>
    <property type="project" value="RGD"/>
</dbReference>
<dbReference type="GO" id="GO:0001570">
    <property type="term" value="P:vasculogenesis"/>
    <property type="evidence" value="ECO:0000250"/>
    <property type="project" value="UniProtKB"/>
</dbReference>
<dbReference type="CDD" id="cd00054">
    <property type="entry name" value="EGF_CA"/>
    <property type="match status" value="1"/>
</dbReference>
<dbReference type="FunFam" id="2.10.25.10:FF:000485">
    <property type="entry name" value="Epidermal growth factor-like protein 7"/>
    <property type="match status" value="1"/>
</dbReference>
<dbReference type="FunFam" id="2.10.25.10:FF:000010">
    <property type="entry name" value="Pro-epidermal growth factor"/>
    <property type="match status" value="1"/>
</dbReference>
<dbReference type="Gene3D" id="2.10.25.10">
    <property type="entry name" value="Laminin"/>
    <property type="match status" value="2"/>
</dbReference>
<dbReference type="InterPro" id="IPR050969">
    <property type="entry name" value="Dev_Signal_Modulators"/>
</dbReference>
<dbReference type="InterPro" id="IPR001881">
    <property type="entry name" value="EGF-like_Ca-bd_dom"/>
</dbReference>
<dbReference type="InterPro" id="IPR000742">
    <property type="entry name" value="EGF-like_dom"/>
</dbReference>
<dbReference type="InterPro" id="IPR018097">
    <property type="entry name" value="EGF_Ca-bd_CS"/>
</dbReference>
<dbReference type="InterPro" id="IPR013111">
    <property type="entry name" value="EGF_extracell"/>
</dbReference>
<dbReference type="InterPro" id="IPR011489">
    <property type="entry name" value="EMI_domain"/>
</dbReference>
<dbReference type="InterPro" id="IPR049883">
    <property type="entry name" value="NOTCH1_EGF-like"/>
</dbReference>
<dbReference type="PANTHER" id="PTHR14949">
    <property type="entry name" value="EGF-LIKE-DOMAIN, MULTIPLE 7, 8"/>
    <property type="match status" value="1"/>
</dbReference>
<dbReference type="PANTHER" id="PTHR14949:SF21">
    <property type="entry name" value="EPIDERMAL GROWTH FACTOR-LIKE PROTEIN 7"/>
    <property type="match status" value="1"/>
</dbReference>
<dbReference type="Pfam" id="PF07974">
    <property type="entry name" value="EGF_2"/>
    <property type="match status" value="1"/>
</dbReference>
<dbReference type="Pfam" id="PF07645">
    <property type="entry name" value="EGF_CA"/>
    <property type="match status" value="1"/>
</dbReference>
<dbReference type="Pfam" id="PF07546">
    <property type="entry name" value="EMI"/>
    <property type="match status" value="1"/>
</dbReference>
<dbReference type="SMART" id="SM00181">
    <property type="entry name" value="EGF"/>
    <property type="match status" value="2"/>
</dbReference>
<dbReference type="SMART" id="SM00179">
    <property type="entry name" value="EGF_CA"/>
    <property type="match status" value="1"/>
</dbReference>
<dbReference type="SUPFAM" id="SSF57196">
    <property type="entry name" value="EGF/Laminin"/>
    <property type="match status" value="2"/>
</dbReference>
<dbReference type="PROSITE" id="PS00010">
    <property type="entry name" value="ASX_HYDROXYL"/>
    <property type="match status" value="1"/>
</dbReference>
<dbReference type="PROSITE" id="PS00022">
    <property type="entry name" value="EGF_1"/>
    <property type="match status" value="1"/>
</dbReference>
<dbReference type="PROSITE" id="PS01186">
    <property type="entry name" value="EGF_2"/>
    <property type="match status" value="1"/>
</dbReference>
<dbReference type="PROSITE" id="PS50026">
    <property type="entry name" value="EGF_3"/>
    <property type="match status" value="2"/>
</dbReference>
<dbReference type="PROSITE" id="PS01187">
    <property type="entry name" value="EGF_CA"/>
    <property type="match status" value="1"/>
</dbReference>
<dbReference type="PROSITE" id="PS51041">
    <property type="entry name" value="EMI"/>
    <property type="match status" value="1"/>
</dbReference>
<protein>
    <recommendedName>
        <fullName>Epidermal growth factor-like protein 7</fullName>
        <shortName>EGF-like protein 7</shortName>
    </recommendedName>
    <alternativeName>
        <fullName>Multiple epidermal growth factor-like domains protein 7</fullName>
        <shortName>Multiple EGF-like domains protein 7</shortName>
    </alternativeName>
</protein>
<name>EGFL7_RAT</name>
<keyword id="KW-0025">Alternative splicing</keyword>
<keyword id="KW-0037">Angiogenesis</keyword>
<keyword id="KW-0106">Calcium</keyword>
<keyword id="KW-0130">Cell adhesion</keyword>
<keyword id="KW-0175">Coiled coil</keyword>
<keyword id="KW-0217">Developmental protein</keyword>
<keyword id="KW-0221">Differentiation</keyword>
<keyword id="KW-1015">Disulfide bond</keyword>
<keyword id="KW-0245">EGF-like domain</keyword>
<keyword id="KW-1185">Reference proteome</keyword>
<keyword id="KW-0677">Repeat</keyword>
<keyword id="KW-0964">Secreted</keyword>
<keyword id="KW-0732">Signal</keyword>
<reference key="1">
    <citation type="submission" date="2000-02" db="EMBL/GenBank/DDBJ databases">
        <title>Cloning and characterization of a novel 20.4kD estrogen-regulated protein in the rat spleen.</title>
        <authorList>
            <person name="Chan M.T.W."/>
            <person name="Ng C.C.Y."/>
            <person name="Lim E.K.B."/>
            <person name="Huynh H.T."/>
        </authorList>
    </citation>
    <scope>NUCLEOTIDE SEQUENCE [MRNA] (ISOFORM 2)</scope>
    <source>
        <tissue>Spleen</tissue>
    </source>
</reference>
<reference key="2">
    <citation type="journal article" date="2004" name="Genome Res.">
        <title>The status, quality, and expansion of the NIH full-length cDNA project: the Mammalian Gene Collection (MGC).</title>
        <authorList>
            <consortium name="The MGC Project Team"/>
        </authorList>
    </citation>
    <scope>NUCLEOTIDE SEQUENCE [LARGE SCALE MRNA] (ISOFORM 1)</scope>
    <source>
        <tissue>Kidney</tissue>
    </source>
</reference>
<sequence>MWGSGELLVAWFLVLAAGGTTEHVYRPSRRVCTVGVSGGSISETFVQRVYQPYLTTCDGHRACSTYRTIYRTAYRIAYRHSPGLTPSRPRYACCPGWKRTNGLPGACGAAICQPPCGNEGSCIRPGRCRCPVGWQGDTCQIDVDECSTGEARCPQRCVNTVGSYWCQCWEGQSPSADGVLCLPKEGPSPVAPSPTPGVDSVVREEVYKLQARVDVLEQKLQLVLAPLHSLASRSPEHGLQDPGSLLAHSFQQLDRIDSLSEQVSFLEEQLGSCSCKKDL</sequence>
<accession>Q6AZ60</accession>
<accession>Q9JKW3</accession>
<feature type="signal peptide" evidence="2">
    <location>
        <begin position="1"/>
        <end position="21"/>
    </location>
</feature>
<feature type="chain" id="PRO_0000007530" description="Epidermal growth factor-like protein 7">
    <location>
        <begin position="22"/>
        <end position="279"/>
    </location>
</feature>
<feature type="domain" description="EMI" evidence="4">
    <location>
        <begin position="28"/>
        <end position="109"/>
    </location>
</feature>
<feature type="domain" description="EGF-like 1" evidence="3">
    <location>
        <begin position="108"/>
        <end position="140"/>
    </location>
</feature>
<feature type="domain" description="EGF-like 2; calcium-binding" evidence="3">
    <location>
        <begin position="142"/>
        <end position="182"/>
    </location>
</feature>
<feature type="coiled-coil region" evidence="2">
    <location>
        <begin position="200"/>
        <end position="224"/>
    </location>
</feature>
<feature type="coiled-coil region" evidence="2">
    <location>
        <begin position="250"/>
        <end position="274"/>
    </location>
</feature>
<feature type="short sequence motif" description="Cell attachment site" evidence="1">
    <location>
        <begin position="131"/>
        <end position="133"/>
    </location>
</feature>
<feature type="disulfide bond" evidence="1">
    <location>
        <begin position="32"/>
        <end position="94"/>
    </location>
</feature>
<feature type="disulfide bond" evidence="1">
    <location>
        <begin position="57"/>
        <end position="63"/>
    </location>
</feature>
<feature type="disulfide bond" evidence="1">
    <location>
        <begin position="93"/>
        <end position="107"/>
    </location>
</feature>
<feature type="disulfide bond" evidence="1">
    <location>
        <begin position="112"/>
        <end position="122"/>
    </location>
</feature>
<feature type="disulfide bond" evidence="1">
    <location>
        <begin position="116"/>
        <end position="128"/>
    </location>
</feature>
<feature type="disulfide bond" evidence="1">
    <location>
        <begin position="130"/>
        <end position="139"/>
    </location>
</feature>
<feature type="disulfide bond" evidence="1">
    <location>
        <begin position="146"/>
        <end position="157"/>
    </location>
</feature>
<feature type="disulfide bond" evidence="1">
    <location>
        <begin position="153"/>
        <end position="166"/>
    </location>
</feature>
<feature type="disulfide bond" evidence="1">
    <location>
        <begin position="168"/>
        <end position="181"/>
    </location>
</feature>
<feature type="splice variant" id="VSP_011766" description="In isoform 2." evidence="5">
    <original>MWGSGELLVAWFLVLAAGGTTEHVYRPSRRVCTVGVSGGSISETFVQRVYQPYLTTCDGHRACSTYRTIYRTAYRIAYRHSPGLTPSRPRYACCPGWKRTNGLPGACGA</original>
    <variation>MPQGSGNSPEWVTDRPLLPT</variation>
    <location>
        <begin position="1"/>
        <end position="109"/>
    </location>
</feature>
<comment type="function">
    <text evidence="1">Regulates vascular tubulogenesis in vivo. Inhibits platelet-derived growth factor (PDGF)-BB-induced smooth muscle cell migration and promotes endothelial cell adhesion to the extracellular matrix and angiogenesis (By similarity).</text>
</comment>
<comment type="subunit">
    <text evidence="1">Interacts with ITGAV/ITGB3 in an RGD-dependent manner, increasing endothelial cell's motility.</text>
</comment>
<comment type="subcellular location">
    <subcellularLocation>
        <location evidence="1">Secreted</location>
        <location evidence="1">Extracellular space</location>
    </subcellularLocation>
</comment>
<comment type="alternative products">
    <event type="alternative splicing"/>
    <isoform>
        <id>Q6AZ60-1</id>
        <name>1</name>
        <sequence type="displayed"/>
    </isoform>
    <isoform>
        <id>Q6AZ60-2</id>
        <name>2</name>
        <sequence type="described" ref="VSP_011766"/>
    </isoform>
</comment>